<evidence type="ECO:0000250" key="1">
    <source>
        <dbReference type="UniProtKB" id="Q9FG35"/>
    </source>
</evidence>
<evidence type="ECO:0000250" key="2">
    <source>
        <dbReference type="UniProtKB" id="Q9LY46"/>
    </source>
</evidence>
<evidence type="ECO:0000255" key="3"/>
<evidence type="ECO:0000305" key="4"/>
<evidence type="ECO:0000305" key="5">
    <source>
    </source>
</evidence>
<feature type="chain" id="PRO_0000425377" description="Protein trichome birefringence-like 11">
    <location>
        <begin position="1"/>
        <end position="464"/>
    </location>
</feature>
<feature type="transmembrane region" description="Helical; Signal-anchor for type II membrane protein" evidence="3">
    <location>
        <begin position="33"/>
        <end position="53"/>
    </location>
</feature>
<feature type="short sequence motif" description="GDS motif">
    <location>
        <begin position="172"/>
        <end position="174"/>
    </location>
</feature>
<feature type="short sequence motif" description="DCXHWCLPGXXDXWN motif">
    <location>
        <begin position="423"/>
        <end position="437"/>
    </location>
</feature>
<sequence length="464" mass="54225">MSKNPSQEEDEAMPISEVVIKRFKRLRLVFEPSLGVLGFFLVGLCLVFSFFYLDYRTVAKTKSHDFSDQSERFLWLKELDGFEVNNTKVGFLEESGNGCDLFNGKWVWDESYPLYQSKDCTFIDEGFRCTEFGRPDLFYTKWRWQPNHCDLPRFDAKLMLEKLRNKRLVFVGDSIGRNQWESLLCMLASAISNKNLVYEVNNRPITKHMGFFVFRFHDYNCTVEYYRAPFLVLQSRPPEGSPEKVKTTLKLETMEWTADKWRDADILVFNTGHWWNYEKTIRGGCYFQEGEKVRMRMKIEHAYRRAMKTVMKWIQEEVDANKTQVFFRTFAPVHFRGGDWRTGGTCHMETLPDFGASLVPAETWDHIKLLQDVLSSSLYYSNISETVKLKVLNITAMAAQRNDGHPSLYYLGLAGPAPFHRQDCSHWCLPGVPDSWNELLYALFLKHEGYSSPRSNNSDTDNFT</sequence>
<dbReference type="EMBL" id="AC069326">
    <property type="status" value="NOT_ANNOTATED_CDS"/>
    <property type="molecule type" value="Genomic_DNA"/>
</dbReference>
<dbReference type="EMBL" id="CP002688">
    <property type="protein sequence ID" value="AED92663.1"/>
    <property type="molecule type" value="Genomic_DNA"/>
</dbReference>
<dbReference type="EMBL" id="AY924838">
    <property type="protein sequence ID" value="AAX23913.1"/>
    <property type="molecule type" value="mRNA"/>
</dbReference>
<dbReference type="EMBL" id="DQ132728">
    <property type="protein sequence ID" value="AAZ52758.1"/>
    <property type="molecule type" value="mRNA"/>
</dbReference>
<dbReference type="EMBL" id="DQ132729">
    <property type="protein sequence ID" value="AAZ52759.1"/>
    <property type="molecule type" value="mRNA"/>
</dbReference>
<dbReference type="RefSeq" id="NP_197417.1">
    <property type="nucleotide sequence ID" value="NM_121921.4"/>
</dbReference>
<dbReference type="SMR" id="Q5BPJ0"/>
<dbReference type="FunCoup" id="Q5BPJ0">
    <property type="interactions" value="39"/>
</dbReference>
<dbReference type="STRING" id="3702.Q5BPJ0"/>
<dbReference type="iPTMnet" id="Q5BPJ0"/>
<dbReference type="PaxDb" id="3702-AT5G19160.1"/>
<dbReference type="ProteomicsDB" id="234240"/>
<dbReference type="EnsemblPlants" id="AT5G19160.1">
    <property type="protein sequence ID" value="AT5G19160.1"/>
    <property type="gene ID" value="AT5G19160"/>
</dbReference>
<dbReference type="GeneID" id="832036"/>
<dbReference type="Gramene" id="AT5G19160.1">
    <property type="protein sequence ID" value="AT5G19160.1"/>
    <property type="gene ID" value="AT5G19160"/>
</dbReference>
<dbReference type="KEGG" id="ath:AT5G19160"/>
<dbReference type="Araport" id="AT5G19160"/>
<dbReference type="TAIR" id="AT5G19160">
    <property type="gene designation" value="TBL11"/>
</dbReference>
<dbReference type="eggNOG" id="ENOG502QPPC">
    <property type="taxonomic scope" value="Eukaryota"/>
</dbReference>
<dbReference type="HOGENOM" id="CLU_020953_0_0_1"/>
<dbReference type="InParanoid" id="Q5BPJ0"/>
<dbReference type="OMA" id="EAYPLYQ"/>
<dbReference type="OrthoDB" id="630188at2759"/>
<dbReference type="PhylomeDB" id="Q5BPJ0"/>
<dbReference type="PRO" id="PR:Q5BPJ0"/>
<dbReference type="Proteomes" id="UP000006548">
    <property type="component" value="Chromosome 5"/>
</dbReference>
<dbReference type="ExpressionAtlas" id="Q5BPJ0">
    <property type="expression patterns" value="baseline and differential"/>
</dbReference>
<dbReference type="GO" id="GO:0016020">
    <property type="term" value="C:membrane"/>
    <property type="evidence" value="ECO:0007669"/>
    <property type="project" value="UniProtKB-SubCell"/>
</dbReference>
<dbReference type="GO" id="GO:0016413">
    <property type="term" value="F:O-acetyltransferase activity"/>
    <property type="evidence" value="ECO:0007669"/>
    <property type="project" value="InterPro"/>
</dbReference>
<dbReference type="InterPro" id="IPR029962">
    <property type="entry name" value="TBL"/>
</dbReference>
<dbReference type="InterPro" id="IPR026057">
    <property type="entry name" value="TBL_C"/>
</dbReference>
<dbReference type="InterPro" id="IPR025846">
    <property type="entry name" value="TBL_N"/>
</dbReference>
<dbReference type="PANTHER" id="PTHR32285:SF213">
    <property type="entry name" value="PROTEIN TRICHOME BIREFRINGENCE-LIKE 11"/>
    <property type="match status" value="1"/>
</dbReference>
<dbReference type="PANTHER" id="PTHR32285">
    <property type="entry name" value="PROTEIN TRICHOME BIREFRINGENCE-LIKE 9-RELATED"/>
    <property type="match status" value="1"/>
</dbReference>
<dbReference type="Pfam" id="PF13839">
    <property type="entry name" value="PC-Esterase"/>
    <property type="match status" value="1"/>
</dbReference>
<dbReference type="Pfam" id="PF14416">
    <property type="entry name" value="PMR5N"/>
    <property type="match status" value="1"/>
</dbReference>
<protein>
    <recommendedName>
        <fullName>Protein trichome birefringence-like 11</fullName>
    </recommendedName>
</protein>
<comment type="function">
    <text evidence="1 2">May act as a bridging protein that binds pectin and other cell wall polysaccharides. Probably involved in maintaining esterification of pectins (By similarity). May be involved in the specific O-acetylation of cell wall polymers (By similarity).</text>
</comment>
<comment type="subcellular location">
    <subcellularLocation>
        <location evidence="4">Membrane</location>
        <topology evidence="4">Single-pass type II membrane protein</topology>
    </subcellularLocation>
</comment>
<comment type="miscellaneous">
    <text evidence="5">Contains 2 motifs that are conserved in esterases, but it is unlikely that this protein belongs to the catalytically active pectin esterases.</text>
</comment>
<comment type="similarity">
    <text evidence="4">Belongs to the PC-esterase family. TBL subfamily.</text>
</comment>
<gene>
    <name type="primary">TBL11</name>
    <name type="ordered locus">At5g19160</name>
    <name type="ORF">T24G5.60</name>
</gene>
<name>TBL11_ARATH</name>
<reference key="1">
    <citation type="journal article" date="2000" name="Nature">
        <title>Sequence and analysis of chromosome 5 of the plant Arabidopsis thaliana.</title>
        <authorList>
            <person name="Tabata S."/>
            <person name="Kaneko T."/>
            <person name="Nakamura Y."/>
            <person name="Kotani H."/>
            <person name="Kato T."/>
            <person name="Asamizu E."/>
            <person name="Miyajima N."/>
            <person name="Sasamoto S."/>
            <person name="Kimura T."/>
            <person name="Hosouchi T."/>
            <person name="Kawashima K."/>
            <person name="Kohara M."/>
            <person name="Matsumoto M."/>
            <person name="Matsuno A."/>
            <person name="Muraki A."/>
            <person name="Nakayama S."/>
            <person name="Nakazaki N."/>
            <person name="Naruo K."/>
            <person name="Okumura S."/>
            <person name="Shinpo S."/>
            <person name="Takeuchi C."/>
            <person name="Wada T."/>
            <person name="Watanabe A."/>
            <person name="Yamada M."/>
            <person name="Yasuda M."/>
            <person name="Sato S."/>
            <person name="de la Bastide M."/>
            <person name="Huang E."/>
            <person name="Spiegel L."/>
            <person name="Gnoj L."/>
            <person name="O'Shaughnessy A."/>
            <person name="Preston R."/>
            <person name="Habermann K."/>
            <person name="Murray J."/>
            <person name="Johnson D."/>
            <person name="Rohlfing T."/>
            <person name="Nelson J."/>
            <person name="Stoneking T."/>
            <person name="Pepin K."/>
            <person name="Spieth J."/>
            <person name="Sekhon M."/>
            <person name="Armstrong J."/>
            <person name="Becker M."/>
            <person name="Belter E."/>
            <person name="Cordum H."/>
            <person name="Cordes M."/>
            <person name="Courtney L."/>
            <person name="Courtney W."/>
            <person name="Dante M."/>
            <person name="Du H."/>
            <person name="Edwards J."/>
            <person name="Fryman J."/>
            <person name="Haakensen B."/>
            <person name="Lamar E."/>
            <person name="Latreille P."/>
            <person name="Leonard S."/>
            <person name="Meyer R."/>
            <person name="Mulvaney E."/>
            <person name="Ozersky P."/>
            <person name="Riley A."/>
            <person name="Strowmatt C."/>
            <person name="Wagner-McPherson C."/>
            <person name="Wollam A."/>
            <person name="Yoakum M."/>
            <person name="Bell M."/>
            <person name="Dedhia N."/>
            <person name="Parnell L."/>
            <person name="Shah R."/>
            <person name="Rodriguez M."/>
            <person name="Hoon See L."/>
            <person name="Vil D."/>
            <person name="Baker J."/>
            <person name="Kirchoff K."/>
            <person name="Toth K."/>
            <person name="King L."/>
            <person name="Bahret A."/>
            <person name="Miller B."/>
            <person name="Marra M.A."/>
            <person name="Martienssen R."/>
            <person name="McCombie W.R."/>
            <person name="Wilson R.K."/>
            <person name="Murphy G."/>
            <person name="Bancroft I."/>
            <person name="Volckaert G."/>
            <person name="Wambutt R."/>
            <person name="Duesterhoeft A."/>
            <person name="Stiekema W."/>
            <person name="Pohl T."/>
            <person name="Entian K.-D."/>
            <person name="Terryn N."/>
            <person name="Hartley N."/>
            <person name="Bent E."/>
            <person name="Johnson S."/>
            <person name="Langham S.-A."/>
            <person name="McCullagh B."/>
            <person name="Robben J."/>
            <person name="Grymonprez B."/>
            <person name="Zimmermann W."/>
            <person name="Ramsperger U."/>
            <person name="Wedler H."/>
            <person name="Balke K."/>
            <person name="Wedler E."/>
            <person name="Peters S."/>
            <person name="van Staveren M."/>
            <person name="Dirkse W."/>
            <person name="Mooijman P."/>
            <person name="Klein Lankhorst R."/>
            <person name="Weitzenegger T."/>
            <person name="Bothe G."/>
            <person name="Rose M."/>
            <person name="Hauf J."/>
            <person name="Berneiser S."/>
            <person name="Hempel S."/>
            <person name="Feldpausch M."/>
            <person name="Lamberth S."/>
            <person name="Villarroel R."/>
            <person name="Gielen J."/>
            <person name="Ardiles W."/>
            <person name="Bents O."/>
            <person name="Lemcke K."/>
            <person name="Kolesov G."/>
            <person name="Mayer K.F.X."/>
            <person name="Rudd S."/>
            <person name="Schoof H."/>
            <person name="Schueller C."/>
            <person name="Zaccaria P."/>
            <person name="Mewes H.-W."/>
            <person name="Bevan M."/>
            <person name="Fransz P.F."/>
        </authorList>
    </citation>
    <scope>NUCLEOTIDE SEQUENCE [LARGE SCALE GENOMIC DNA]</scope>
    <source>
        <strain>cv. Columbia</strain>
    </source>
</reference>
<reference key="2">
    <citation type="journal article" date="2017" name="Plant J.">
        <title>Araport11: a complete reannotation of the Arabidopsis thaliana reference genome.</title>
        <authorList>
            <person name="Cheng C.Y."/>
            <person name="Krishnakumar V."/>
            <person name="Chan A.P."/>
            <person name="Thibaud-Nissen F."/>
            <person name="Schobel S."/>
            <person name="Town C.D."/>
        </authorList>
    </citation>
    <scope>GENOME REANNOTATION</scope>
    <source>
        <strain>cv. Columbia</strain>
    </source>
</reference>
<reference key="3">
    <citation type="submission" date="2005-03" db="EMBL/GenBank/DDBJ databases">
        <authorList>
            <person name="Underwood B.A."/>
            <person name="Xiao Y.-L."/>
            <person name="Moskal W.A. Jr."/>
            <person name="Monaghan E.L."/>
            <person name="Wang W."/>
            <person name="Redman J.C."/>
            <person name="Wu H.C."/>
            <person name="Utterback T."/>
            <person name="Town C.D."/>
        </authorList>
    </citation>
    <scope>NUCLEOTIDE SEQUENCE [LARGE SCALE MRNA]</scope>
    <source>
        <strain>cv. Columbia</strain>
    </source>
</reference>
<reference key="4">
    <citation type="journal article" date="2005" name="Plant Physiol.">
        <title>Analysis of the cDNAs of hypothetical genes on Arabidopsis chromosome 2 reveals numerous transcript variants.</title>
        <authorList>
            <person name="Xiao Y.-L."/>
            <person name="Smith S.R."/>
            <person name="Ishmael N."/>
            <person name="Redman J.C."/>
            <person name="Kumar N."/>
            <person name="Monaghan E.L."/>
            <person name="Ayele M."/>
            <person name="Haas B.J."/>
            <person name="Wu H.C."/>
            <person name="Town C.D."/>
        </authorList>
    </citation>
    <scope>NUCLEOTIDE SEQUENCE [LARGE SCALE MRNA]</scope>
    <source>
        <strain>cv. Columbia</strain>
    </source>
</reference>
<reference key="5">
    <citation type="journal article" date="2007" name="Plant J.">
        <title>Arabidopsis ESK1 encodes a novel regulator of freezing tolerance.</title>
        <authorList>
            <person name="Xin Z."/>
            <person name="Mandaokar A."/>
            <person name="Chen J."/>
            <person name="Last R.L."/>
            <person name="Browse J."/>
        </authorList>
    </citation>
    <scope>GENE FAMILY</scope>
    <source>
        <strain>cv. Columbia</strain>
    </source>
</reference>
<reference key="6">
    <citation type="journal article" date="2010" name="Plant Physiol.">
        <title>TRICHOME BIREFRINGENCE and its homolog AT5G01360 encode plant-specific DUF231 proteins required for cellulose biosynthesis in Arabidopsis.</title>
        <authorList>
            <person name="Bischoff V."/>
            <person name="Nita S."/>
            <person name="Neumetzler L."/>
            <person name="Schindelasch D."/>
            <person name="Urbain A."/>
            <person name="Eshed R."/>
            <person name="Persson S."/>
            <person name="Delmer D."/>
            <person name="Scheible W.R."/>
        </authorList>
    </citation>
    <scope>GENE FAMILY</scope>
    <scope>NOMENCLATURE</scope>
</reference>
<reference key="7">
    <citation type="journal article" date="2010" name="Plant Signal. Behav.">
        <title>Involvement of TBL/DUF231 proteins into cell wall biology.</title>
        <authorList>
            <person name="Bischoff V."/>
            <person name="Selbig J."/>
            <person name="Scheible W.R."/>
        </authorList>
    </citation>
    <scope>3D-STRUCTURE MODELING</scope>
</reference>
<organism>
    <name type="scientific">Arabidopsis thaliana</name>
    <name type="common">Mouse-ear cress</name>
    <dbReference type="NCBI Taxonomy" id="3702"/>
    <lineage>
        <taxon>Eukaryota</taxon>
        <taxon>Viridiplantae</taxon>
        <taxon>Streptophyta</taxon>
        <taxon>Embryophyta</taxon>
        <taxon>Tracheophyta</taxon>
        <taxon>Spermatophyta</taxon>
        <taxon>Magnoliopsida</taxon>
        <taxon>eudicotyledons</taxon>
        <taxon>Gunneridae</taxon>
        <taxon>Pentapetalae</taxon>
        <taxon>rosids</taxon>
        <taxon>malvids</taxon>
        <taxon>Brassicales</taxon>
        <taxon>Brassicaceae</taxon>
        <taxon>Camelineae</taxon>
        <taxon>Arabidopsis</taxon>
    </lineage>
</organism>
<accession>Q5BPJ0</accession>
<proteinExistence type="evidence at transcript level"/>
<keyword id="KW-0472">Membrane</keyword>
<keyword id="KW-1185">Reference proteome</keyword>
<keyword id="KW-0735">Signal-anchor</keyword>
<keyword id="KW-0812">Transmembrane</keyword>
<keyword id="KW-1133">Transmembrane helix</keyword>